<keyword id="KW-0227">DNA damage</keyword>
<keyword id="KW-0233">DNA recombination</keyword>
<keyword id="KW-0234">DNA repair</keyword>
<proteinExistence type="inferred from homology"/>
<gene>
    <name evidence="1" type="primary">recO</name>
    <name type="ordered locus">SSU98_0026</name>
</gene>
<name>RECO_STRS2</name>
<reference key="1">
    <citation type="journal article" date="2007" name="PLoS ONE">
        <title>A glimpse of streptococcal toxic shock syndrome from comparative genomics of S. suis 2 Chinese isolates.</title>
        <authorList>
            <person name="Chen C."/>
            <person name="Tang J."/>
            <person name="Dong W."/>
            <person name="Wang C."/>
            <person name="Feng Y."/>
            <person name="Wang J."/>
            <person name="Zheng F."/>
            <person name="Pan X."/>
            <person name="Liu D."/>
            <person name="Li M."/>
            <person name="Song Y."/>
            <person name="Zhu X."/>
            <person name="Sun H."/>
            <person name="Feng T."/>
            <person name="Guo Z."/>
            <person name="Ju A."/>
            <person name="Ge J."/>
            <person name="Dong Y."/>
            <person name="Sun W."/>
            <person name="Jiang Y."/>
            <person name="Wang J."/>
            <person name="Yan J."/>
            <person name="Yang H."/>
            <person name="Wang X."/>
            <person name="Gao G.F."/>
            <person name="Yang R."/>
            <person name="Wang J."/>
            <person name="Yu J."/>
        </authorList>
    </citation>
    <scope>NUCLEOTIDE SEQUENCE [LARGE SCALE GENOMIC DNA]</scope>
    <source>
        <strain>98HAH33</strain>
    </source>
</reference>
<organism>
    <name type="scientific">Streptococcus suis (strain 98HAH33)</name>
    <dbReference type="NCBI Taxonomy" id="391296"/>
    <lineage>
        <taxon>Bacteria</taxon>
        <taxon>Bacillati</taxon>
        <taxon>Bacillota</taxon>
        <taxon>Bacilli</taxon>
        <taxon>Lactobacillales</taxon>
        <taxon>Streptococcaceae</taxon>
        <taxon>Streptococcus</taxon>
    </lineage>
</organism>
<sequence>MERIETRGLVLYNRNFREDDKLVKIFTEKAGKRMFFVKHASKSKLVASIQPLTYADFIVKINDDGLSYIEDFHQVQPFKNINGDIFKLSYATYILALADAALQDKVYDPALFAFLVKTLDLMESGLDYEVLTNIFEIQLLGRFGISLNFHECAFCHRVGLPFDYSYKYSGVLCPQHYQQDERRAYLDPNVPYLLDQFQAISFDELETISIKPEMKRKLRFFIDQLYEEYVGIHLKSKKFIDDLSSWGQIMKPRTENEETE</sequence>
<feature type="chain" id="PRO_1000012161" description="DNA repair protein RecO">
    <location>
        <begin position="1"/>
        <end position="260"/>
    </location>
</feature>
<accession>A4VYJ7</accession>
<evidence type="ECO:0000255" key="1">
    <source>
        <dbReference type="HAMAP-Rule" id="MF_00201"/>
    </source>
</evidence>
<comment type="function">
    <text evidence="1">Involved in DNA repair and RecF pathway recombination.</text>
</comment>
<comment type="similarity">
    <text evidence="1">Belongs to the RecO family.</text>
</comment>
<dbReference type="EMBL" id="CP000408">
    <property type="protein sequence ID" value="ABP91186.1"/>
    <property type="molecule type" value="Genomic_DNA"/>
</dbReference>
<dbReference type="SMR" id="A4VYJ7"/>
<dbReference type="KEGG" id="ssv:SSU98_0026"/>
<dbReference type="HOGENOM" id="CLU_066632_4_0_9"/>
<dbReference type="GO" id="GO:0043590">
    <property type="term" value="C:bacterial nucleoid"/>
    <property type="evidence" value="ECO:0007669"/>
    <property type="project" value="TreeGrafter"/>
</dbReference>
<dbReference type="GO" id="GO:0006310">
    <property type="term" value="P:DNA recombination"/>
    <property type="evidence" value="ECO:0007669"/>
    <property type="project" value="UniProtKB-UniRule"/>
</dbReference>
<dbReference type="GO" id="GO:0006302">
    <property type="term" value="P:double-strand break repair"/>
    <property type="evidence" value="ECO:0007669"/>
    <property type="project" value="TreeGrafter"/>
</dbReference>
<dbReference type="Gene3D" id="2.40.50.140">
    <property type="entry name" value="Nucleic acid-binding proteins"/>
    <property type="match status" value="1"/>
</dbReference>
<dbReference type="Gene3D" id="1.20.1440.120">
    <property type="entry name" value="Recombination protein O, C-terminal domain"/>
    <property type="match status" value="1"/>
</dbReference>
<dbReference type="HAMAP" id="MF_00201">
    <property type="entry name" value="RecO"/>
    <property type="match status" value="1"/>
</dbReference>
<dbReference type="InterPro" id="IPR037278">
    <property type="entry name" value="ARFGAP/RecO"/>
</dbReference>
<dbReference type="InterPro" id="IPR022572">
    <property type="entry name" value="DNA_rep/recomb_RecO_N"/>
</dbReference>
<dbReference type="InterPro" id="IPR012340">
    <property type="entry name" value="NA-bd_OB-fold"/>
</dbReference>
<dbReference type="InterPro" id="IPR003717">
    <property type="entry name" value="RecO"/>
</dbReference>
<dbReference type="InterPro" id="IPR042242">
    <property type="entry name" value="RecO_C"/>
</dbReference>
<dbReference type="NCBIfam" id="TIGR00613">
    <property type="entry name" value="reco"/>
    <property type="match status" value="1"/>
</dbReference>
<dbReference type="PANTHER" id="PTHR33991">
    <property type="entry name" value="DNA REPAIR PROTEIN RECO"/>
    <property type="match status" value="1"/>
</dbReference>
<dbReference type="PANTHER" id="PTHR33991:SF1">
    <property type="entry name" value="DNA REPAIR PROTEIN RECO"/>
    <property type="match status" value="1"/>
</dbReference>
<dbReference type="Pfam" id="PF02565">
    <property type="entry name" value="RecO_C"/>
    <property type="match status" value="1"/>
</dbReference>
<dbReference type="Pfam" id="PF11967">
    <property type="entry name" value="RecO_N"/>
    <property type="match status" value="1"/>
</dbReference>
<dbReference type="SUPFAM" id="SSF57863">
    <property type="entry name" value="ArfGap/RecO-like zinc finger"/>
    <property type="match status" value="1"/>
</dbReference>
<dbReference type="SUPFAM" id="SSF50249">
    <property type="entry name" value="Nucleic acid-binding proteins"/>
    <property type="match status" value="1"/>
</dbReference>
<protein>
    <recommendedName>
        <fullName evidence="1">DNA repair protein RecO</fullName>
    </recommendedName>
    <alternativeName>
        <fullName evidence="1">Recombination protein O</fullName>
    </alternativeName>
</protein>